<keyword id="KW-1003">Cell membrane</keyword>
<keyword id="KW-0350">Heme biosynthesis</keyword>
<keyword id="KW-0408">Iron</keyword>
<keyword id="KW-0472">Membrane</keyword>
<keyword id="KW-0479">Metal-binding</keyword>
<keyword id="KW-0560">Oxidoreductase</keyword>
<keyword id="KW-0812">Transmembrane</keyword>
<keyword id="KW-1133">Transmembrane helix</keyword>
<dbReference type="EC" id="1.17.99.9" evidence="1"/>
<dbReference type="EMBL" id="AE014291">
    <property type="protein sequence ID" value="AAN29716.1"/>
    <property type="molecule type" value="Genomic_DNA"/>
</dbReference>
<dbReference type="EMBL" id="CP002997">
    <property type="protein sequence ID" value="AEM18133.1"/>
    <property type="molecule type" value="Genomic_DNA"/>
</dbReference>
<dbReference type="RefSeq" id="WP_002969419.1">
    <property type="nucleotide sequence ID" value="NZ_KN046804.1"/>
</dbReference>
<dbReference type="SMR" id="Q8G1D1"/>
<dbReference type="KEGG" id="bms:BR0787"/>
<dbReference type="KEGG" id="bsi:BS1330_I0783"/>
<dbReference type="PATRIC" id="fig|204722.21.peg.3740"/>
<dbReference type="HOGENOM" id="CLU_017627_0_0_5"/>
<dbReference type="PhylomeDB" id="Q8G1D1"/>
<dbReference type="UniPathway" id="UPA00269">
    <property type="reaction ID" value="UER00713"/>
</dbReference>
<dbReference type="Proteomes" id="UP000007104">
    <property type="component" value="Chromosome I"/>
</dbReference>
<dbReference type="GO" id="GO:0005886">
    <property type="term" value="C:plasma membrane"/>
    <property type="evidence" value="ECO:0007669"/>
    <property type="project" value="UniProtKB-SubCell"/>
</dbReference>
<dbReference type="GO" id="GO:0046872">
    <property type="term" value="F:metal ion binding"/>
    <property type="evidence" value="ECO:0007669"/>
    <property type="project" value="UniProtKB-KW"/>
</dbReference>
<dbReference type="GO" id="GO:0016653">
    <property type="term" value="F:oxidoreductase activity, acting on NAD(P)H, heme protein as acceptor"/>
    <property type="evidence" value="ECO:0007669"/>
    <property type="project" value="InterPro"/>
</dbReference>
<dbReference type="GO" id="GO:0006784">
    <property type="term" value="P:heme A biosynthetic process"/>
    <property type="evidence" value="ECO:0007669"/>
    <property type="project" value="UniProtKB-UniRule"/>
</dbReference>
<dbReference type="HAMAP" id="MF_01665">
    <property type="entry name" value="HemeA_synth_type2"/>
    <property type="match status" value="1"/>
</dbReference>
<dbReference type="InterPro" id="IPR003780">
    <property type="entry name" value="COX15/CtaA_fam"/>
</dbReference>
<dbReference type="InterPro" id="IPR023754">
    <property type="entry name" value="HemeA_Synthase_type2"/>
</dbReference>
<dbReference type="PANTHER" id="PTHR23289">
    <property type="entry name" value="CYTOCHROME C OXIDASE ASSEMBLY PROTEIN COX15"/>
    <property type="match status" value="1"/>
</dbReference>
<dbReference type="PANTHER" id="PTHR23289:SF2">
    <property type="entry name" value="CYTOCHROME C OXIDASE ASSEMBLY PROTEIN COX15 HOMOLOG"/>
    <property type="match status" value="1"/>
</dbReference>
<dbReference type="Pfam" id="PF02628">
    <property type="entry name" value="COX15-CtaA"/>
    <property type="match status" value="1"/>
</dbReference>
<reference key="1">
    <citation type="journal article" date="2002" name="Proc. Natl. Acad. Sci. U.S.A.">
        <title>The Brucella suis genome reveals fundamental similarities between animal and plant pathogens and symbionts.</title>
        <authorList>
            <person name="Paulsen I.T."/>
            <person name="Seshadri R."/>
            <person name="Nelson K.E."/>
            <person name="Eisen J.A."/>
            <person name="Heidelberg J.F."/>
            <person name="Read T.D."/>
            <person name="Dodson R.J."/>
            <person name="Umayam L.A."/>
            <person name="Brinkac L.M."/>
            <person name="Beanan M.J."/>
            <person name="Daugherty S.C."/>
            <person name="DeBoy R.T."/>
            <person name="Durkin A.S."/>
            <person name="Kolonay J.F."/>
            <person name="Madupu R."/>
            <person name="Nelson W.C."/>
            <person name="Ayodeji B."/>
            <person name="Kraul M."/>
            <person name="Shetty J."/>
            <person name="Malek J.A."/>
            <person name="Van Aken S.E."/>
            <person name="Riedmuller S."/>
            <person name="Tettelin H."/>
            <person name="Gill S.R."/>
            <person name="White O."/>
            <person name="Salzberg S.L."/>
            <person name="Hoover D.L."/>
            <person name="Lindler L.E."/>
            <person name="Halling S.M."/>
            <person name="Boyle S.M."/>
            <person name="Fraser C.M."/>
        </authorList>
    </citation>
    <scope>NUCLEOTIDE SEQUENCE [LARGE SCALE GENOMIC DNA]</scope>
    <source>
        <strain>1330</strain>
    </source>
</reference>
<reference key="2">
    <citation type="journal article" date="2011" name="J. Bacteriol.">
        <title>Revised genome sequence of Brucella suis 1330.</title>
        <authorList>
            <person name="Tae H."/>
            <person name="Shallom S."/>
            <person name="Settlage R."/>
            <person name="Preston D."/>
            <person name="Adams L.G."/>
            <person name="Garner H.R."/>
        </authorList>
    </citation>
    <scope>NUCLEOTIDE SEQUENCE [LARGE SCALE GENOMIC DNA]</scope>
    <source>
        <strain>1330</strain>
    </source>
</reference>
<evidence type="ECO:0000255" key="1">
    <source>
        <dbReference type="HAMAP-Rule" id="MF_01665"/>
    </source>
</evidence>
<gene>
    <name evidence="1" type="primary">ctaA</name>
    <name type="ordered locus">BR0787</name>
    <name type="ordered locus">BS1330_I0783</name>
</gene>
<organism>
    <name type="scientific">Brucella suis biovar 1 (strain 1330)</name>
    <dbReference type="NCBI Taxonomy" id="204722"/>
    <lineage>
        <taxon>Bacteria</taxon>
        <taxon>Pseudomonadati</taxon>
        <taxon>Pseudomonadota</taxon>
        <taxon>Alphaproteobacteria</taxon>
        <taxon>Hyphomicrobiales</taxon>
        <taxon>Brucellaceae</taxon>
        <taxon>Brucella/Ochrobactrum group</taxon>
        <taxon>Brucella</taxon>
    </lineage>
</organism>
<protein>
    <recommendedName>
        <fullName evidence="1">Heme A synthase</fullName>
        <shortName evidence="1">HAS</shortName>
        <ecNumber evidence="1">1.17.99.9</ecNumber>
    </recommendedName>
    <alternativeName>
        <fullName evidence="1">Cytochrome aa3-controlling protein</fullName>
    </alternativeName>
</protein>
<name>CTAA_BRUSU</name>
<feature type="chain" id="PRO_0000349025" description="Heme A synthase">
    <location>
        <begin position="1"/>
        <end position="358"/>
    </location>
</feature>
<feature type="transmembrane region" description="Helical" evidence="1">
    <location>
        <begin position="25"/>
        <end position="45"/>
    </location>
</feature>
<feature type="transmembrane region" description="Helical" evidence="1">
    <location>
        <begin position="111"/>
        <end position="131"/>
    </location>
</feature>
<feature type="transmembrane region" description="Helical" evidence="1">
    <location>
        <begin position="141"/>
        <end position="161"/>
    </location>
</feature>
<feature type="transmembrane region" description="Helical" evidence="1">
    <location>
        <begin position="176"/>
        <end position="196"/>
    </location>
</feature>
<feature type="transmembrane region" description="Helical" evidence="1">
    <location>
        <begin position="210"/>
        <end position="230"/>
    </location>
</feature>
<feature type="transmembrane region" description="Helical" evidence="1">
    <location>
        <begin position="269"/>
        <end position="289"/>
    </location>
</feature>
<feature type="transmembrane region" description="Helical" evidence="1">
    <location>
        <begin position="304"/>
        <end position="324"/>
    </location>
</feature>
<feature type="transmembrane region" description="Helical" evidence="1">
    <location>
        <begin position="326"/>
        <end position="346"/>
    </location>
</feature>
<feature type="binding site" description="axial binding residue" evidence="1">
    <location>
        <position position="273"/>
    </location>
    <ligand>
        <name>heme</name>
        <dbReference type="ChEBI" id="CHEBI:30413"/>
    </ligand>
    <ligandPart>
        <name>Fe</name>
        <dbReference type="ChEBI" id="CHEBI:18248"/>
    </ligandPart>
</feature>
<feature type="binding site" description="axial binding residue" evidence="1">
    <location>
        <position position="334"/>
    </location>
    <ligand>
        <name>heme</name>
        <dbReference type="ChEBI" id="CHEBI:30413"/>
    </ligand>
    <ligandPart>
        <name>Fe</name>
        <dbReference type="ChEBI" id="CHEBI:18248"/>
    </ligandPart>
</feature>
<comment type="function">
    <text evidence="1">Catalyzes the conversion of heme O to heme A by two successive hydroxylations of the methyl group at C8. The first hydroxylation forms heme I, the second hydroxylation results in an unstable dihydroxymethyl group, which spontaneously dehydrates, resulting in the formyl group of heme A.</text>
</comment>
<comment type="catalytic activity">
    <reaction evidence="1">
        <text>Fe(II)-heme o + 2 A + H2O = Fe(II)-heme a + 2 AH2</text>
        <dbReference type="Rhea" id="RHEA:63388"/>
        <dbReference type="ChEBI" id="CHEBI:13193"/>
        <dbReference type="ChEBI" id="CHEBI:15377"/>
        <dbReference type="ChEBI" id="CHEBI:17499"/>
        <dbReference type="ChEBI" id="CHEBI:60530"/>
        <dbReference type="ChEBI" id="CHEBI:61715"/>
        <dbReference type="EC" id="1.17.99.9"/>
    </reaction>
    <physiologicalReaction direction="left-to-right" evidence="1">
        <dbReference type="Rhea" id="RHEA:63389"/>
    </physiologicalReaction>
</comment>
<comment type="cofactor">
    <cofactor evidence="1">
        <name>heme b</name>
        <dbReference type="ChEBI" id="CHEBI:60344"/>
    </cofactor>
</comment>
<comment type="pathway">
    <text evidence="1">Porphyrin-containing compound metabolism; heme A biosynthesis; heme A from heme O: step 1/1.</text>
</comment>
<comment type="subunit">
    <text evidence="1">Interacts with CtaB.</text>
</comment>
<comment type="subcellular location">
    <subcellularLocation>
        <location evidence="1">Cell membrane</location>
        <topology evidence="1">Multi-pass membrane protein</topology>
    </subcellularLocation>
</comment>
<comment type="similarity">
    <text evidence="1">Belongs to the COX15/CtaA family. Type 2 subfamily.</text>
</comment>
<sequence>MAATSAQHIGLQGHGTSRNDRDRRLVRYWLYAVFAVLIAIVMVGGATRMTGSGLSITEWKPIHGVIPPLNHAEWVEEFEKYQQIPQYQQINKGMSLAEFQYIFWWEWAHRLLARFVGFLVAVPLGFFWLTGRLKGGLKYRMLGLLALGGLQGAIGWWMVASGLSELTSVSQYRLAIHLTTACVIITAVFYIARGLVTYSERPAERSIQRFAGWIVFAVLVQIYLGGLVAGLHAGLTYNTWPLMDGAIIPSDLFTQAPWWRNLFENPKTVQFVHRMFAYTVLLLAILHAVQVWKNAPGTTHARRTIVLVGLVFIQAMIGIATLLMSAPLHLGLTHQFFALVVLAFAVAHWRATKGAYAA</sequence>
<proteinExistence type="inferred from homology"/>
<accession>Q8G1D1</accession>
<accession>G0K8T5</accession>